<keyword id="KW-0687">Ribonucleoprotein</keyword>
<keyword id="KW-0689">Ribosomal protein</keyword>
<keyword id="KW-0694">RNA-binding</keyword>
<keyword id="KW-0699">rRNA-binding</keyword>
<dbReference type="EMBL" id="CP000656">
    <property type="protein sequence ID" value="ABP47498.1"/>
    <property type="molecule type" value="Genomic_DNA"/>
</dbReference>
<dbReference type="SMR" id="A4TEC2"/>
<dbReference type="STRING" id="350054.Mflv_5032"/>
<dbReference type="KEGG" id="mgi:Mflv_5032"/>
<dbReference type="eggNOG" id="COG0097">
    <property type="taxonomic scope" value="Bacteria"/>
</dbReference>
<dbReference type="HOGENOM" id="CLU_065464_1_2_11"/>
<dbReference type="OrthoDB" id="9805007at2"/>
<dbReference type="GO" id="GO:0022625">
    <property type="term" value="C:cytosolic large ribosomal subunit"/>
    <property type="evidence" value="ECO:0007669"/>
    <property type="project" value="TreeGrafter"/>
</dbReference>
<dbReference type="GO" id="GO:0019843">
    <property type="term" value="F:rRNA binding"/>
    <property type="evidence" value="ECO:0007669"/>
    <property type="project" value="UniProtKB-UniRule"/>
</dbReference>
<dbReference type="GO" id="GO:0003735">
    <property type="term" value="F:structural constituent of ribosome"/>
    <property type="evidence" value="ECO:0007669"/>
    <property type="project" value="InterPro"/>
</dbReference>
<dbReference type="GO" id="GO:0002181">
    <property type="term" value="P:cytoplasmic translation"/>
    <property type="evidence" value="ECO:0007669"/>
    <property type="project" value="TreeGrafter"/>
</dbReference>
<dbReference type="FunFam" id="3.90.930.12:FF:000001">
    <property type="entry name" value="50S ribosomal protein L6"/>
    <property type="match status" value="1"/>
</dbReference>
<dbReference type="FunFam" id="3.90.930.12:FF:000002">
    <property type="entry name" value="50S ribosomal protein L6"/>
    <property type="match status" value="1"/>
</dbReference>
<dbReference type="Gene3D" id="3.90.930.12">
    <property type="entry name" value="Ribosomal protein L6, alpha-beta domain"/>
    <property type="match status" value="2"/>
</dbReference>
<dbReference type="HAMAP" id="MF_01365_B">
    <property type="entry name" value="Ribosomal_uL6_B"/>
    <property type="match status" value="1"/>
</dbReference>
<dbReference type="InterPro" id="IPR000702">
    <property type="entry name" value="Ribosomal_uL6-like"/>
</dbReference>
<dbReference type="InterPro" id="IPR036789">
    <property type="entry name" value="Ribosomal_uL6-like_a/b-dom_sf"/>
</dbReference>
<dbReference type="InterPro" id="IPR020040">
    <property type="entry name" value="Ribosomal_uL6_a/b-dom"/>
</dbReference>
<dbReference type="InterPro" id="IPR019906">
    <property type="entry name" value="Ribosomal_uL6_bac-type"/>
</dbReference>
<dbReference type="InterPro" id="IPR002358">
    <property type="entry name" value="Ribosomal_uL6_CS"/>
</dbReference>
<dbReference type="NCBIfam" id="TIGR03654">
    <property type="entry name" value="L6_bact"/>
    <property type="match status" value="1"/>
</dbReference>
<dbReference type="PANTHER" id="PTHR11655">
    <property type="entry name" value="60S/50S RIBOSOMAL PROTEIN L6/L9"/>
    <property type="match status" value="1"/>
</dbReference>
<dbReference type="PANTHER" id="PTHR11655:SF14">
    <property type="entry name" value="LARGE RIBOSOMAL SUBUNIT PROTEIN UL6M"/>
    <property type="match status" value="1"/>
</dbReference>
<dbReference type="Pfam" id="PF00347">
    <property type="entry name" value="Ribosomal_L6"/>
    <property type="match status" value="2"/>
</dbReference>
<dbReference type="PIRSF" id="PIRSF002162">
    <property type="entry name" value="Ribosomal_L6"/>
    <property type="match status" value="1"/>
</dbReference>
<dbReference type="PRINTS" id="PR00059">
    <property type="entry name" value="RIBOSOMALL6"/>
</dbReference>
<dbReference type="SUPFAM" id="SSF56053">
    <property type="entry name" value="Ribosomal protein L6"/>
    <property type="match status" value="2"/>
</dbReference>
<dbReference type="PROSITE" id="PS00525">
    <property type="entry name" value="RIBOSOMAL_L6_1"/>
    <property type="match status" value="1"/>
</dbReference>
<name>RL6_MYCGI</name>
<accession>A4TEC2</accession>
<protein>
    <recommendedName>
        <fullName evidence="1">Large ribosomal subunit protein uL6</fullName>
    </recommendedName>
    <alternativeName>
        <fullName evidence="2">50S ribosomal protein L6</fullName>
    </alternativeName>
</protein>
<sequence length="179" mass="19271">MSRIGKQPVPVPAGVDVTISGQNVSVKGPKGTLTLDVAEPIEVSRNDDGAIVVTRPNDERRNRSLHGLSRTLIANLVTGVTEGYTTKMEIFGVGYRVVAKGSNLEFALGYSHPVLINAPEGVTFAVETPTKFSISGIDKQAVGQIAANIRRLRKSDPYKGKGIRYEGEQIRRKVGKTGK</sequence>
<gene>
    <name evidence="1" type="primary">rplF</name>
    <name type="ordered locus">Mflv_5032</name>
</gene>
<evidence type="ECO:0000255" key="1">
    <source>
        <dbReference type="HAMAP-Rule" id="MF_01365"/>
    </source>
</evidence>
<evidence type="ECO:0000305" key="2"/>
<comment type="function">
    <text evidence="1">This protein binds to the 23S rRNA, and is important in its secondary structure. It is located near the subunit interface in the base of the L7/L12 stalk, and near the tRNA binding site of the peptidyltransferase center.</text>
</comment>
<comment type="subunit">
    <text evidence="1">Part of the 50S ribosomal subunit.</text>
</comment>
<comment type="similarity">
    <text evidence="1">Belongs to the universal ribosomal protein uL6 family.</text>
</comment>
<feature type="chain" id="PRO_1000087051" description="Large ribosomal subunit protein uL6">
    <location>
        <begin position="1"/>
        <end position="179"/>
    </location>
</feature>
<proteinExistence type="inferred from homology"/>
<organism>
    <name type="scientific">Mycolicibacterium gilvum (strain PYR-GCK)</name>
    <name type="common">Mycobacterium gilvum (strain PYR-GCK)</name>
    <dbReference type="NCBI Taxonomy" id="350054"/>
    <lineage>
        <taxon>Bacteria</taxon>
        <taxon>Bacillati</taxon>
        <taxon>Actinomycetota</taxon>
        <taxon>Actinomycetes</taxon>
        <taxon>Mycobacteriales</taxon>
        <taxon>Mycobacteriaceae</taxon>
        <taxon>Mycolicibacterium</taxon>
    </lineage>
</organism>
<reference key="1">
    <citation type="submission" date="2007-04" db="EMBL/GenBank/DDBJ databases">
        <title>Complete sequence of chromosome of Mycobacterium gilvum PYR-GCK.</title>
        <authorList>
            <consortium name="US DOE Joint Genome Institute"/>
            <person name="Copeland A."/>
            <person name="Lucas S."/>
            <person name="Lapidus A."/>
            <person name="Barry K."/>
            <person name="Detter J.C."/>
            <person name="Glavina del Rio T."/>
            <person name="Hammon N."/>
            <person name="Israni S."/>
            <person name="Dalin E."/>
            <person name="Tice H."/>
            <person name="Pitluck S."/>
            <person name="Chain P."/>
            <person name="Malfatti S."/>
            <person name="Shin M."/>
            <person name="Vergez L."/>
            <person name="Schmutz J."/>
            <person name="Larimer F."/>
            <person name="Land M."/>
            <person name="Hauser L."/>
            <person name="Kyrpides N."/>
            <person name="Mikhailova N."/>
            <person name="Miller C."/>
            <person name="Richardson P."/>
        </authorList>
    </citation>
    <scope>NUCLEOTIDE SEQUENCE [LARGE SCALE GENOMIC DNA]</scope>
    <source>
        <strain>PYR-GCK</strain>
    </source>
</reference>